<proteinExistence type="evidence at transcript level"/>
<accession>O73683</accession>
<gene>
    <name type="primary">app</name>
</gene>
<reference key="1">
    <citation type="journal article" date="1998" name="Gene">
        <title>Analysis of pufferfish homologues of the AT-rich human APP gene.</title>
        <authorList>
            <person name="Villard L."/>
            <person name="Tassone F."/>
            <person name="Crnogorac-Jurcevic T."/>
            <person name="Clancy K."/>
            <person name="Gardiner K."/>
        </authorList>
    </citation>
    <scope>NUCLEOTIDE SEQUENCE [MRNA]</scope>
</reference>
<comment type="function">
    <text evidence="1">Functional neuronal receptor which couples to intracellular signaling pathway through the GTP-binding protein G(O).</text>
</comment>
<comment type="subcellular location">
    <subcellularLocation>
        <location>Membrane</location>
        <topology>Single-pass type I membrane protein</topology>
    </subcellularLocation>
</comment>
<comment type="similarity">
    <text evidence="5">Belongs to the APP family.</text>
</comment>
<keyword id="KW-0034">Amyloid</keyword>
<keyword id="KW-0186">Copper</keyword>
<keyword id="KW-1015">Disulfide bond</keyword>
<keyword id="KW-0325">Glycoprotein</keyword>
<keyword id="KW-0472">Membrane</keyword>
<keyword id="KW-0479">Metal-binding</keyword>
<keyword id="KW-0646">Protease inhibitor</keyword>
<keyword id="KW-0722">Serine protease inhibitor</keyword>
<keyword id="KW-0732">Signal</keyword>
<keyword id="KW-0812">Transmembrane</keyword>
<keyword id="KW-1133">Transmembrane helix</keyword>
<feature type="signal peptide" evidence="3">
    <location>
        <begin position="1"/>
        <end position="18"/>
    </location>
</feature>
<feature type="chain" id="PRO_0000000199" description="Amyloid-beta A4 protein">
    <location>
        <begin position="19"/>
        <end position="780"/>
    </location>
</feature>
<feature type="chain" id="PRO_0000000200" description="Amyloid-beta protein" evidence="3">
    <location>
        <begin position="682"/>
        <end position="724"/>
    </location>
</feature>
<feature type="topological domain" description="Extracellular" evidence="3">
    <location>
        <begin position="19"/>
        <end position="711"/>
    </location>
</feature>
<feature type="transmembrane region" description="Helical" evidence="3">
    <location>
        <begin position="712"/>
        <end position="732"/>
    </location>
</feature>
<feature type="topological domain" description="Cytoplasmic" evidence="3">
    <location>
        <begin position="733"/>
        <end position="780"/>
    </location>
</feature>
<feature type="domain" description="E1" evidence="5">
    <location>
        <begin position="29"/>
        <end position="190"/>
    </location>
</feature>
<feature type="domain" description="BPTI/Kunitz inhibitor" evidence="4">
    <location>
        <begin position="323"/>
        <end position="382"/>
    </location>
</feature>
<feature type="domain" description="E2" evidence="6">
    <location>
        <begin position="392"/>
        <end position="583"/>
    </location>
</feature>
<feature type="region of interest" description="GFLD subdomain" evidence="5">
    <location>
        <begin position="29"/>
        <end position="124"/>
    </location>
</feature>
<feature type="region of interest" description="CuBD subdomain" evidence="5">
    <location>
        <begin position="132"/>
        <end position="190"/>
    </location>
</feature>
<feature type="region of interest" description="Disordered" evidence="7">
    <location>
        <begin position="194"/>
        <end position="316"/>
    </location>
</feature>
<feature type="region of interest" description="Disordered" evidence="7">
    <location>
        <begin position="648"/>
        <end position="669"/>
    </location>
</feature>
<feature type="region of interest" description="Clathrin-binding" evidence="1">
    <location>
        <begin position="769"/>
        <end position="772"/>
    </location>
</feature>
<feature type="short sequence motif" description="YENPXY motif" evidence="2">
    <location>
        <begin position="767"/>
        <end position="772"/>
    </location>
</feature>
<feature type="compositionally biased region" description="Acidic residues" evidence="7">
    <location>
        <begin position="240"/>
        <end position="300"/>
    </location>
</feature>
<feature type="compositionally biased region" description="Low complexity" evidence="7">
    <location>
        <begin position="301"/>
        <end position="316"/>
    </location>
</feature>
<feature type="binding site" evidence="5">
    <location>
        <position position="148"/>
    </location>
    <ligand>
        <name>Cu cation</name>
        <dbReference type="ChEBI" id="CHEBI:23378"/>
    </ligand>
</feature>
<feature type="binding site" evidence="5">
    <location>
        <position position="152"/>
    </location>
    <ligand>
        <name>Cu cation</name>
        <dbReference type="ChEBI" id="CHEBI:23378"/>
    </ligand>
</feature>
<feature type="binding site" evidence="5">
    <location>
        <position position="169"/>
    </location>
    <ligand>
        <name>Cu cation</name>
        <dbReference type="ChEBI" id="CHEBI:23378"/>
    </ligand>
</feature>
<feature type="site" description="Required for Cu(2+) reduction" evidence="5">
    <location>
        <position position="171"/>
    </location>
</feature>
<feature type="glycosylation site" description="N-linked (GlcNAc...) asparagine" evidence="3">
    <location>
        <position position="560"/>
    </location>
</feature>
<feature type="disulfide bond" evidence="5">
    <location>
        <begin position="39"/>
        <end position="63"/>
    </location>
</feature>
<feature type="disulfide bond" evidence="5">
    <location>
        <begin position="74"/>
        <end position="118"/>
    </location>
</feature>
<feature type="disulfide bond" evidence="5">
    <location>
        <begin position="99"/>
        <end position="106"/>
    </location>
</feature>
<feature type="disulfide bond" evidence="5">
    <location>
        <begin position="134"/>
        <end position="188"/>
    </location>
</feature>
<feature type="disulfide bond" evidence="5">
    <location>
        <begin position="145"/>
        <end position="175"/>
    </location>
</feature>
<feature type="disulfide bond" evidence="5">
    <location>
        <begin position="159"/>
        <end position="187"/>
    </location>
</feature>
<feature type="disulfide bond" evidence="4">
    <location>
        <begin position="327"/>
        <end position="378"/>
    </location>
</feature>
<feature type="disulfide bond" evidence="4">
    <location>
        <begin position="336"/>
        <end position="361"/>
    </location>
</feature>
<sequence length="780" mass="88238">MGHSVAWLLLVAAASTLAAEVPTDVSMGLLAEPQVAMFCGKINMHINVQSGKWEPDPSGTKSCIGTKEGILQYCQEVYPELQITNVVEANQPVSIQNWCKKGRKQCRSHMHIVVPYRCLVGEFVSDALLVPDKCKFLHQERMNQCESHLHWHTVAKESCGDRAMNLHDYGMLLPCGIDRFRGVEFVCCPAEAERDMDSTEKDADDSDVWWGGADNDYSDNSMVREPEPAEQQEETRPSVVEEEEEGEVAQEDDEEEEEVLDTDQDGDGEEDHEAADDEEEEEDVDEIDAFGESDDVDADEPTTNVAMTTTTTTTTTESVEEVVRMFCWAHADTGPCTASMPSWYFDAVDGRTMYELMYGGCGGNMNNFESEEYCLSVCSSVVPTDMPSSPDAVDHYLETPADENEHAHFQKAKESLEAKHRERMSQVMREWEEAERQAKNLPRADKKIVIQRFQEKVEALEQEAASERQQLVETHMARVEALLNDRRRLALENYLTALQQDPPRPRHVFSLLKKYVRAEQKDRQHTLKHFEHVRMVDPKKAAQIRPQVLTHLRVIEERMNQSLGLLYKVPGVADDIQDQVELLQREQAEMAQQLANLQTDVRVSYGNDALMPDQELGDGQADLLPQEDTLGGVGFVHPESFNQLNTENQVEPVDSRPTFERGVPTRPVTGKSMEAVPELRMETEDRQSTEYEVHHQKLVFFAEDVGSNKGAIIGLMVGGVVIATVIVITLVMLRKKQYTSIHHGIIEVDAAVTPEERHLSKMQQNGYENPTYKFFEQMQN</sequence>
<protein>
    <recommendedName>
        <fullName>Amyloid-beta A4 protein</fullName>
    </recommendedName>
    <alternativeName>
        <fullName>ABPP</fullName>
        <shortName>APP</shortName>
    </alternativeName>
    <alternativeName>
        <fullName>Alzheimer disease amyloid A4 protein homolog</fullName>
    </alternativeName>
    <alternativeName>
        <fullName evidence="8">Amyloid precursor protein</fullName>
    </alternativeName>
    <alternativeName>
        <fullName evidence="8">Amyloid-beta precursor protein</fullName>
    </alternativeName>
    <component>
        <recommendedName>
            <fullName>Amyloid-beta protein</fullName>
        </recommendedName>
        <alternativeName>
            <fullName>A-beta</fullName>
        </alternativeName>
        <alternativeName>
            <fullName>APP-beta</fullName>
        </alternativeName>
    </component>
</protein>
<dbReference type="EMBL" id="AF018165">
    <property type="protein sequence ID" value="AAC41275.1"/>
    <property type="molecule type" value="mRNA"/>
</dbReference>
<dbReference type="BMRB" id="O73683"/>
<dbReference type="SMR" id="O73683"/>
<dbReference type="GlyCosmos" id="O73683">
    <property type="glycosylation" value="1 site, No reported glycans"/>
</dbReference>
<dbReference type="GO" id="GO:0009986">
    <property type="term" value="C:cell surface"/>
    <property type="evidence" value="ECO:0007669"/>
    <property type="project" value="TreeGrafter"/>
</dbReference>
<dbReference type="GO" id="GO:0005769">
    <property type="term" value="C:early endosome"/>
    <property type="evidence" value="ECO:0007669"/>
    <property type="project" value="TreeGrafter"/>
</dbReference>
<dbReference type="GO" id="GO:0005794">
    <property type="term" value="C:Golgi apparatus"/>
    <property type="evidence" value="ECO:0007669"/>
    <property type="project" value="TreeGrafter"/>
</dbReference>
<dbReference type="GO" id="GO:0005798">
    <property type="term" value="C:Golgi-associated vesicle"/>
    <property type="evidence" value="ECO:0000250"/>
    <property type="project" value="UniProtKB"/>
</dbReference>
<dbReference type="GO" id="GO:0045121">
    <property type="term" value="C:membrane raft"/>
    <property type="evidence" value="ECO:0007669"/>
    <property type="project" value="TreeGrafter"/>
</dbReference>
<dbReference type="GO" id="GO:0005886">
    <property type="term" value="C:plasma membrane"/>
    <property type="evidence" value="ECO:0007669"/>
    <property type="project" value="TreeGrafter"/>
</dbReference>
<dbReference type="GO" id="GO:0055037">
    <property type="term" value="C:recycling endosome"/>
    <property type="evidence" value="ECO:0000250"/>
    <property type="project" value="UniProtKB"/>
</dbReference>
<dbReference type="GO" id="GO:0008201">
    <property type="term" value="F:heparin binding"/>
    <property type="evidence" value="ECO:0007669"/>
    <property type="project" value="InterPro"/>
</dbReference>
<dbReference type="GO" id="GO:0004867">
    <property type="term" value="F:serine-type endopeptidase inhibitor activity"/>
    <property type="evidence" value="ECO:0007669"/>
    <property type="project" value="UniProtKB-KW"/>
</dbReference>
<dbReference type="GO" id="GO:0030546">
    <property type="term" value="F:signaling receptor activator activity"/>
    <property type="evidence" value="ECO:0007669"/>
    <property type="project" value="TreeGrafter"/>
</dbReference>
<dbReference type="GO" id="GO:0005102">
    <property type="term" value="F:signaling receptor binding"/>
    <property type="evidence" value="ECO:0007669"/>
    <property type="project" value="TreeGrafter"/>
</dbReference>
<dbReference type="GO" id="GO:0046914">
    <property type="term" value="F:transition metal ion binding"/>
    <property type="evidence" value="ECO:0007669"/>
    <property type="project" value="InterPro"/>
</dbReference>
<dbReference type="GO" id="GO:0007409">
    <property type="term" value="P:axonogenesis"/>
    <property type="evidence" value="ECO:0007669"/>
    <property type="project" value="TreeGrafter"/>
</dbReference>
<dbReference type="GO" id="GO:0007417">
    <property type="term" value="P:central nervous system development"/>
    <property type="evidence" value="ECO:0007669"/>
    <property type="project" value="TreeGrafter"/>
</dbReference>
<dbReference type="CDD" id="cd22607">
    <property type="entry name" value="Kunitz_ABPP-like"/>
    <property type="match status" value="1"/>
</dbReference>
<dbReference type="FunFam" id="3.30.1490.140:FF:000001">
    <property type="entry name" value="Amyloid beta (A4) protein b"/>
    <property type="match status" value="1"/>
</dbReference>
<dbReference type="FunFam" id="3.90.570.10:FF:000001">
    <property type="entry name" value="Amyloid beta A4 protein"/>
    <property type="match status" value="1"/>
</dbReference>
<dbReference type="FunFam" id="1.20.120.770:FF:000001">
    <property type="entry name" value="Amyloid beta A4 protein-like isoform 1"/>
    <property type="match status" value="1"/>
</dbReference>
<dbReference type="FunFam" id="4.10.410.10:FF:000003">
    <property type="entry name" value="amyloid-like protein 2 isoform X1"/>
    <property type="match status" value="1"/>
</dbReference>
<dbReference type="Gene3D" id="6.10.250.1670">
    <property type="match status" value="1"/>
</dbReference>
<dbReference type="Gene3D" id="1.20.120.770">
    <property type="entry name" value="Amyloid precursor protein, E2 domain"/>
    <property type="match status" value="1"/>
</dbReference>
<dbReference type="Gene3D" id="3.30.1490.140">
    <property type="entry name" value="Amyloidogenic glycoprotein, copper-binding domain"/>
    <property type="match status" value="1"/>
</dbReference>
<dbReference type="Gene3D" id="3.90.570.10">
    <property type="entry name" value="Amyloidogenic glycoprotein, heparin-binding domain"/>
    <property type="match status" value="1"/>
</dbReference>
<dbReference type="Gene3D" id="4.10.410.10">
    <property type="entry name" value="Pancreatic trypsin inhibitor Kunitz domain"/>
    <property type="match status" value="1"/>
</dbReference>
<dbReference type="Gene3D" id="2.30.29.30">
    <property type="entry name" value="Pleckstrin-homology domain (PH domain)/Phosphotyrosine-binding domain (PTB)"/>
    <property type="match status" value="1"/>
</dbReference>
<dbReference type="InterPro" id="IPR036669">
    <property type="entry name" value="Amyloid_Cu-bd_sf"/>
</dbReference>
<dbReference type="InterPro" id="IPR008155">
    <property type="entry name" value="Amyloid_glyco"/>
</dbReference>
<dbReference type="InterPro" id="IPR013803">
    <property type="entry name" value="Amyloid_glyco_Abeta"/>
</dbReference>
<dbReference type="InterPro" id="IPR011178">
    <property type="entry name" value="Amyloid_glyco_Cu-bd"/>
</dbReference>
<dbReference type="InterPro" id="IPR024329">
    <property type="entry name" value="Amyloid_glyco_E2_domain"/>
</dbReference>
<dbReference type="InterPro" id="IPR008154">
    <property type="entry name" value="Amyloid_glyco_extra"/>
</dbReference>
<dbReference type="InterPro" id="IPR015849">
    <property type="entry name" value="Amyloid_glyco_heparin-bd"/>
</dbReference>
<dbReference type="InterPro" id="IPR036454">
    <property type="entry name" value="Amyloid_glyco_heparin-bd_sf"/>
</dbReference>
<dbReference type="InterPro" id="IPR019745">
    <property type="entry name" value="Amyloid_glyco_intracell_CS"/>
</dbReference>
<dbReference type="InterPro" id="IPR019543">
    <property type="entry name" value="APP_amyloid_C"/>
</dbReference>
<dbReference type="InterPro" id="IPR019744">
    <property type="entry name" value="APP_CUBD_CS"/>
</dbReference>
<dbReference type="InterPro" id="IPR036176">
    <property type="entry name" value="E2_sf"/>
</dbReference>
<dbReference type="InterPro" id="IPR002223">
    <property type="entry name" value="Kunitz_BPTI"/>
</dbReference>
<dbReference type="InterPro" id="IPR036880">
    <property type="entry name" value="Kunitz_BPTI_sf"/>
</dbReference>
<dbReference type="InterPro" id="IPR011993">
    <property type="entry name" value="PH-like_dom_sf"/>
</dbReference>
<dbReference type="PANTHER" id="PTHR23103">
    <property type="entry name" value="ALZHEIMER'S DISEASE BETA-AMYLOID RELATED"/>
    <property type="match status" value="1"/>
</dbReference>
<dbReference type="PANTHER" id="PTHR23103:SF7">
    <property type="entry name" value="AMYLOID-BETA PRECURSOR PROTEIN"/>
    <property type="match status" value="1"/>
</dbReference>
<dbReference type="Pfam" id="PF10515">
    <property type="entry name" value="APP_amyloid"/>
    <property type="match status" value="1"/>
</dbReference>
<dbReference type="Pfam" id="PF12924">
    <property type="entry name" value="APP_Cu_bd"/>
    <property type="match status" value="1"/>
</dbReference>
<dbReference type="Pfam" id="PF12925">
    <property type="entry name" value="APP_E2"/>
    <property type="match status" value="1"/>
</dbReference>
<dbReference type="Pfam" id="PF02177">
    <property type="entry name" value="APP_N"/>
    <property type="match status" value="1"/>
</dbReference>
<dbReference type="Pfam" id="PF03494">
    <property type="entry name" value="Beta-APP"/>
    <property type="match status" value="1"/>
</dbReference>
<dbReference type="Pfam" id="PF00014">
    <property type="entry name" value="Kunitz_BPTI"/>
    <property type="match status" value="1"/>
</dbReference>
<dbReference type="PRINTS" id="PR00203">
    <property type="entry name" value="AMYLOIDA4"/>
</dbReference>
<dbReference type="PRINTS" id="PR00759">
    <property type="entry name" value="BASICPTASE"/>
</dbReference>
<dbReference type="PRINTS" id="PR00204">
    <property type="entry name" value="BETAAMYLOID"/>
</dbReference>
<dbReference type="SMART" id="SM00006">
    <property type="entry name" value="A4_EXTRA"/>
    <property type="match status" value="1"/>
</dbReference>
<dbReference type="SMART" id="SM00131">
    <property type="entry name" value="KU"/>
    <property type="match status" value="1"/>
</dbReference>
<dbReference type="SUPFAM" id="SSF56491">
    <property type="entry name" value="A heparin-binding domain"/>
    <property type="match status" value="1"/>
</dbReference>
<dbReference type="SUPFAM" id="SSF89811">
    <property type="entry name" value="Amyloid beta a4 protein copper binding domain (domain 2)"/>
    <property type="match status" value="1"/>
</dbReference>
<dbReference type="SUPFAM" id="SSF57362">
    <property type="entry name" value="BPTI-like"/>
    <property type="match status" value="1"/>
</dbReference>
<dbReference type="SUPFAM" id="SSF109843">
    <property type="entry name" value="CAPPD, an extracellular domain of amyloid beta A4 protein"/>
    <property type="match status" value="1"/>
</dbReference>
<dbReference type="PROSITE" id="PS00319">
    <property type="entry name" value="APP_CUBD"/>
    <property type="match status" value="1"/>
</dbReference>
<dbReference type="PROSITE" id="PS51869">
    <property type="entry name" value="APP_E1"/>
    <property type="match status" value="1"/>
</dbReference>
<dbReference type="PROSITE" id="PS51870">
    <property type="entry name" value="APP_E2"/>
    <property type="match status" value="1"/>
</dbReference>
<dbReference type="PROSITE" id="PS00320">
    <property type="entry name" value="APP_INTRA"/>
    <property type="match status" value="1"/>
</dbReference>
<dbReference type="PROSITE" id="PS50279">
    <property type="entry name" value="BPTI_KUNITZ_2"/>
    <property type="match status" value="1"/>
</dbReference>
<name>A4_DICFU</name>
<evidence type="ECO:0000250" key="1"/>
<evidence type="ECO:0000250" key="2">
    <source>
        <dbReference type="UniProtKB" id="P05067"/>
    </source>
</evidence>
<evidence type="ECO:0000255" key="3"/>
<evidence type="ECO:0000255" key="4">
    <source>
        <dbReference type="PROSITE-ProRule" id="PRU00031"/>
    </source>
</evidence>
<evidence type="ECO:0000255" key="5">
    <source>
        <dbReference type="PROSITE-ProRule" id="PRU01217"/>
    </source>
</evidence>
<evidence type="ECO:0000255" key="6">
    <source>
        <dbReference type="PROSITE-ProRule" id="PRU01218"/>
    </source>
</evidence>
<evidence type="ECO:0000256" key="7">
    <source>
        <dbReference type="SAM" id="MobiDB-lite"/>
    </source>
</evidence>
<evidence type="ECO:0000305" key="8"/>
<organism>
    <name type="scientific">Dichotomyctere fluviatilis</name>
    <name type="common">Green pufferfish</name>
    <name type="synonym">Tetraodon fluviatilis</name>
    <dbReference type="NCBI Taxonomy" id="2593188"/>
    <lineage>
        <taxon>Eukaryota</taxon>
        <taxon>Metazoa</taxon>
        <taxon>Chordata</taxon>
        <taxon>Craniata</taxon>
        <taxon>Vertebrata</taxon>
        <taxon>Euteleostomi</taxon>
        <taxon>Actinopterygii</taxon>
        <taxon>Neopterygii</taxon>
        <taxon>Teleostei</taxon>
        <taxon>Neoteleostei</taxon>
        <taxon>Acanthomorphata</taxon>
        <taxon>Eupercaria</taxon>
        <taxon>Tetraodontiformes</taxon>
        <taxon>Tetradontoidea</taxon>
        <taxon>Tetraodontidae</taxon>
        <taxon>Dichotomyctere</taxon>
    </lineage>
</organism>